<proteinExistence type="evidence at protein level"/>
<comment type="function">
    <text evidence="8 9 11 12 13 15 18">Ribosome-dependent ATPase that functions in cytoplasmic translation elongation (PubMed:29300771, PubMed:6456269, PubMed:7657623, PubMed:9705146, PubMed:36948349, PubMed:8599608). Required for the ATP-dependent release of deacylated tRNA from the ribosomal E-site during protein biosynthesis (PubMed:7657623, PubMed:9705146). Stimulates the eEF1A-dependent binding of aminoacyl-tRNA to the ribosomal A-site, which has reduced affinity for tRNA as long as the E-site is occupied (PubMed:7657623). Assists translation termination by stimulating the release of nascent protein from the ribosome by release factors (PubMed:36948349). In nutrient-replete conditions, occupies the space on the ribosome bound by GCN1 during amino acid starvation conditions, and therefore indirectly negatively regulates GCN2 kinase activity in replete conditions (PubMed:22888004).</text>
</comment>
<comment type="catalytic activity">
    <reaction evidence="9 12 13 14 21">
        <text>ATP + H2O = ADP + phosphate + H(+)</text>
        <dbReference type="Rhea" id="RHEA:13065"/>
        <dbReference type="ChEBI" id="CHEBI:15377"/>
        <dbReference type="ChEBI" id="CHEBI:15378"/>
        <dbReference type="ChEBI" id="CHEBI:30616"/>
        <dbReference type="ChEBI" id="CHEBI:43474"/>
        <dbReference type="ChEBI" id="CHEBI:456216"/>
    </reaction>
</comment>
<comment type="activity regulation">
    <text evidence="14">Inhibited by the translational inhibitors neomycin and alpha-sarcin, which suppress the ATPase activity.</text>
</comment>
<comment type="biophysicochemical properties">
    <kinetics>
        <KM evidence="14">0.126 mM for ATP</KM>
        <KM evidence="14">0.125 mM for GTP</KM>
        <Vmax evidence="14">15.2 umol/min/mg enzyme with ATP as substrate</Vmax>
    </kinetics>
</comment>
<comment type="pathway">
    <text evidence="9 11 12 13 15 18">Protein biosynthesis; polypeptide chain elongation.</text>
</comment>
<comment type="subunit">
    <text evidence="3 6 8 17 19">Monomer (PubMed:16929303). Interacts with elongation factor 1A (eEF1A) (PubMed:9990316, PubMed:12493761). Interacts through its N-terminus with 18S rRNA (PubMed:9553076). Associates with ribosomes; preferentially binds ribosomes in the post-translocational state (bearing a peptidyl-tRNA in the P-site) in the presence of ATP, suggesting that ATP hydrolysis is required for ribosome dissociation (PubMed:16929303, PubMed:22888004).</text>
</comment>
<comment type="subcellular location">
    <subcellularLocation>
        <location evidence="4">Cytoplasm</location>
        <location evidence="4">Cytosol</location>
    </subcellularLocation>
</comment>
<comment type="induction">
    <text evidence="10">Increases in strong (1 mM) hydrogen peroxide stress, and decreases in milder (0.5 mM) hydrogen peroxide stress.</text>
</comment>
<comment type="domain">
    <text evidence="8">The heat repeats and the C-terminal domain are necessary for impairing GCN1 function on ribosomes, and hence preventing GCN2 kinase activity in amino acid-starved or repleted cells (PubMed:22888004).</text>
</comment>
<comment type="miscellaneous">
    <text evidence="5">Present with 870578 molecules/cell in log phase SD medium.</text>
</comment>
<comment type="similarity">
    <text evidence="20">Belongs to the ABC transporter superfamily. ABCF family. EF3 subfamily.</text>
</comment>
<reference key="1">
    <citation type="journal article" date="1990" name="J. Biol. Chem.">
        <title>Sequence analysis of the translational elongation factor 3 from Saccharomyces cerevisiae.</title>
        <authorList>
            <person name="Qin S."/>
            <person name="Xie A."/>
            <person name="Bonato M.C.M."/>
            <person name="McLaughlin C.S."/>
        </authorList>
    </citation>
    <scope>NUCLEOTIDE SEQUENCE [GENOMIC DNA]</scope>
</reference>
<reference key="2">
    <citation type="journal article" date="1990" name="Biochim. Biophys. Acta">
        <title>Isolation and characterization of the structural gene encoding elongation factor 3.</title>
        <authorList>
            <person name="Sandbaken M.G."/>
            <person name="Lupisella J.A."/>
            <person name="DiDomenico B."/>
            <person name="Chakraburtty K."/>
        </authorList>
    </citation>
    <scope>NUCLEOTIDE SEQUENCE [GENOMIC DNA]</scope>
</reference>
<reference key="3">
    <citation type="journal article" date="1990" name="J. Biol. Chem.">
        <title>Protein synthesis in yeast. Structural and functional analysis of the gene encoding elongation factor 3.</title>
        <authorList>
            <person name="Sandbaken M.G."/>
            <person name="Lupisella J.A."/>
            <person name="DiDomenico B."/>
            <person name="Chakraburtty K."/>
        </authorList>
    </citation>
    <scope>NUCLEOTIDE SEQUENCE [GENOMIC DNA]</scope>
</reference>
<reference key="4">
    <citation type="journal article" date="1997" name="Nature">
        <title>The nucleotide sequence of Saccharomyces cerevisiae chromosome XII.</title>
        <authorList>
            <person name="Johnston M."/>
            <person name="Hillier L.W."/>
            <person name="Riles L."/>
            <person name="Albermann K."/>
            <person name="Andre B."/>
            <person name="Ansorge W."/>
            <person name="Benes V."/>
            <person name="Brueckner M."/>
            <person name="Delius H."/>
            <person name="Dubois E."/>
            <person name="Duesterhoeft A."/>
            <person name="Entian K.-D."/>
            <person name="Floeth M."/>
            <person name="Goffeau A."/>
            <person name="Hebling U."/>
            <person name="Heumann K."/>
            <person name="Heuss-Neitzel D."/>
            <person name="Hilbert H."/>
            <person name="Hilger F."/>
            <person name="Kleine K."/>
            <person name="Koetter P."/>
            <person name="Louis E.J."/>
            <person name="Messenguy F."/>
            <person name="Mewes H.-W."/>
            <person name="Miosga T."/>
            <person name="Moestl D."/>
            <person name="Mueller-Auer S."/>
            <person name="Nentwich U."/>
            <person name="Obermaier B."/>
            <person name="Piravandi E."/>
            <person name="Pohl T.M."/>
            <person name="Portetelle D."/>
            <person name="Purnelle B."/>
            <person name="Rechmann S."/>
            <person name="Rieger M."/>
            <person name="Rinke M."/>
            <person name="Rose M."/>
            <person name="Scharfe M."/>
            <person name="Scherens B."/>
            <person name="Scholler P."/>
            <person name="Schwager C."/>
            <person name="Schwarz S."/>
            <person name="Underwood A.P."/>
            <person name="Urrestarazu L.A."/>
            <person name="Vandenbol M."/>
            <person name="Verhasselt P."/>
            <person name="Vierendeels F."/>
            <person name="Voet M."/>
            <person name="Volckaert G."/>
            <person name="Voss H."/>
            <person name="Wambutt R."/>
            <person name="Wedler E."/>
            <person name="Wedler H."/>
            <person name="Zimmermann F.K."/>
            <person name="Zollner A."/>
            <person name="Hani J."/>
            <person name="Hoheisel J.D."/>
        </authorList>
    </citation>
    <scope>NUCLEOTIDE SEQUENCE [LARGE SCALE GENOMIC DNA]</scope>
    <source>
        <strain>ATCC 204508 / S288c</strain>
    </source>
</reference>
<reference key="5">
    <citation type="journal article" date="2014" name="G3 (Bethesda)">
        <title>The reference genome sequence of Saccharomyces cerevisiae: Then and now.</title>
        <authorList>
            <person name="Engel S.R."/>
            <person name="Dietrich F.S."/>
            <person name="Fisk D.G."/>
            <person name="Binkley G."/>
            <person name="Balakrishnan R."/>
            <person name="Costanzo M.C."/>
            <person name="Dwight S.S."/>
            <person name="Hitz B.C."/>
            <person name="Karra K."/>
            <person name="Nash R.S."/>
            <person name="Weng S."/>
            <person name="Wong E.D."/>
            <person name="Lloyd P."/>
            <person name="Skrzypek M.S."/>
            <person name="Miyasato S.R."/>
            <person name="Simison M."/>
            <person name="Cherry J.M."/>
        </authorList>
    </citation>
    <scope>GENOME REANNOTATION</scope>
    <source>
        <strain>ATCC 204508 / S288c</strain>
    </source>
</reference>
<reference key="6">
    <citation type="journal article" date="1999" name="Biosci. Biotechnol. Biochem.">
        <title>Detection and analysis of translation elongation factor 3 genes from various yeasts.</title>
        <authorList>
            <person name="Uritani M."/>
            <person name="Shoumura Y."/>
            <person name="Yamada S."/>
        </authorList>
    </citation>
    <scope>NUCLEOTIDE SEQUENCE [GENOMIC DNA] OF 446-955</scope>
    <source>
        <strain>ATCC 208279 / BJ926</strain>
    </source>
</reference>
<reference key="7">
    <citation type="journal article" date="1994" name="Electrophoresis">
        <title>Protein identifications for a Saccharomyces cerevisiae protein database.</title>
        <authorList>
            <person name="Garrels J.I."/>
            <person name="Futcher B."/>
            <person name="Kobayashi R."/>
            <person name="Latter G.I."/>
            <person name="Schwender B."/>
            <person name="Volpe T."/>
            <person name="Warner J.R."/>
            <person name="McLaughlin C.S."/>
        </authorList>
    </citation>
    <scope>PROTEIN SEQUENCE OF 959-967</scope>
    <source>
        <strain>ATCC 204508 / S288c</strain>
    </source>
</reference>
<reference key="8">
    <citation type="journal article" date="1981" name="J. Biol. Chem.">
        <title>Protein synthesis in yeast. I. Purification and properties of elongation factor 3 from Saccharomyces cerevisiae.</title>
        <authorList>
            <person name="Dasmahapatra B."/>
            <person name="Chakraburtty K."/>
        </authorList>
    </citation>
    <scope>FUNCTION</scope>
    <scope>CATALYTIC ACTIVITY</scope>
    <scope>PATHWAY</scope>
</reference>
<reference key="9">
    <citation type="journal article" date="1995" name="J. Biol. Chem.">
        <title>The elongation factor 3 unique in higher fungi and essential for protein biosynthesis is an E site factor.</title>
        <authorList>
            <person name="Triana-Alonso F.J."/>
            <person name="Chakraburtty K."/>
            <person name="Nierhaus K.H."/>
        </authorList>
    </citation>
    <scope>FUNCTION</scope>
    <scope>CATALYTIC ACTIVITY</scope>
    <scope>PATHWAY</scope>
</reference>
<reference key="10">
    <citation type="journal article" date="1994" name="Eur. J. Biochem.">
        <title>Comparative analysis of ribosome-associated adenosinetriphosphatase (ATPase) from pig liver and the ATPase of elongation factor 3 from Saccharomyces cerevisiae.</title>
        <authorList>
            <person name="Kovalchuke O."/>
            <person name="Chakraburtty K."/>
        </authorList>
    </citation>
    <scope>CATALYTIC ACTIVITY</scope>
    <scope>BIOPHYSICOCHEMICAL PROPERTIES</scope>
    <scope>ACTIVITY REGULATION</scope>
</reference>
<reference key="11">
    <citation type="journal article" date="1996" name="Biochim. Biophys. Acta">
        <title>A point mutation within each of two ATP-binding motifs inactivates the functions of elongation factor 3.</title>
        <authorList>
            <person name="Yang H."/>
            <person name="Hamada K."/>
            <person name="Terashima H."/>
            <person name="Izuta M."/>
            <person name="Yamaguchi-Sihta E."/>
            <person name="Kondoh O."/>
            <person name="Satoh H."/>
            <person name="Miyazaki M."/>
            <person name="Arisawa M."/>
            <person name="Miyamoto C."/>
            <person name="Kitada K."/>
        </authorList>
    </citation>
    <scope>FUNCTION</scope>
    <scope>CATALYTIC ACTIVITY</scope>
    <scope>PATHWAY</scope>
    <scope>MUTAGENESIS OF GLY-463; LYS-469; GLY-701 AND LYS-707</scope>
</reference>
<reference key="12">
    <citation type="journal article" date="1997" name="Electrophoresis">
        <title>Proteome studies of Saccharomyces cerevisiae: identification and characterization of abundant proteins.</title>
        <authorList>
            <person name="Garrels J.I."/>
            <person name="McLaughlin C.S."/>
            <person name="Warner J.R."/>
            <person name="Futcher B."/>
            <person name="Latter G.I."/>
            <person name="Kobayashi R."/>
            <person name="Schwender B."/>
            <person name="Volpe T."/>
            <person name="Anderson D.S."/>
            <person name="Mesquita-Fuentes R."/>
            <person name="Payne W.E."/>
        </authorList>
    </citation>
    <scope>ACETYLATION AT SER-2</scope>
</reference>
<reference key="13">
    <citation type="journal article" date="1998" name="Biol. Chem.">
        <title>Yeast elongation factor 3: structure and function.</title>
        <authorList>
            <person name="Chakraburtty K."/>
            <person name="Triana-Alonso F.J."/>
        </authorList>
    </citation>
    <scope>FUNCTION</scope>
    <scope>PATHWAY</scope>
</reference>
<reference key="14">
    <citation type="journal article" date="1998" name="Eur. J. Biochem.">
        <title>Competition and cooperation amongst yeast elongation factors.</title>
        <authorList>
            <person name="Kovalchuke O."/>
            <person name="Kambampati R."/>
            <person name="Pladies E."/>
            <person name="Chakraburtty K."/>
        </authorList>
    </citation>
    <scope>INTERACTION WITH EEF1A</scope>
</reference>
<reference key="15">
    <citation type="journal article" date="1998" name="Yeast">
        <title>Identification and kinetic analysis of a functional homolog of elongation factor 3, YEF3 in Saccharomyces cerevisiae.</title>
        <authorList>
            <person name="Sarthy A.V."/>
            <person name="McGonigal T."/>
            <person name="Capobianco J.O."/>
            <person name="Schmidt M."/>
            <person name="Green S.R."/>
            <person name="Moehle C.M."/>
            <person name="Goldman R.C."/>
        </authorList>
    </citation>
    <scope>CHARACTERIZATION</scope>
</reference>
<reference key="16">
    <citation type="journal article" date="1998" name="J. Biol. Chem.">
        <title>The N-terminus of eukaryotic translation elongation factor 3 interacts with 18 S rRNA and 80 S ribosomes.</title>
        <authorList>
            <person name="Gontarek R.R."/>
            <person name="Li H."/>
            <person name="Nurse K."/>
            <person name="Prescott C.D."/>
        </authorList>
    </citation>
    <scope>INTERACTION WITH 18S RRNA</scope>
</reference>
<reference key="17">
    <citation type="journal article" date="1999" name="Mol. Cell. Biol.">
        <title>A sampling of the yeast proteome.</title>
        <authorList>
            <person name="Futcher B."/>
            <person name="Latter G.I."/>
            <person name="Monardo P."/>
            <person name="McLaughlin C.S."/>
            <person name="Garrels J.I."/>
        </authorList>
    </citation>
    <scope>PHOSPHORYLATION</scope>
</reference>
<reference key="18">
    <citation type="journal article" date="2003" name="J. Biol. Chem.">
        <title>Functional interactions between yeast translation eukaryotic elongation factor (eEF) 1A and eEF3.</title>
        <authorList>
            <person name="Anand M."/>
            <person name="Chakraburtty K."/>
            <person name="Marton M.J."/>
            <person name="Hinnebusch A.G."/>
            <person name="Kinzy T.G."/>
        </authorList>
    </citation>
    <scope>MUTAGENESIS OF PHE-650</scope>
    <scope>INTERACTION WITH EEF1A</scope>
</reference>
<reference key="19">
    <citation type="journal article" date="2003" name="Nature">
        <title>Global analysis of protein localization in budding yeast.</title>
        <authorList>
            <person name="Huh W.-K."/>
            <person name="Falvo J.V."/>
            <person name="Gerke L.C."/>
            <person name="Carroll A.S."/>
            <person name="Howson R.W."/>
            <person name="Weissman J.S."/>
            <person name="O'Shea E.K."/>
        </authorList>
    </citation>
    <scope>SUBCELLULAR LOCATION [LARGE SCALE ANALYSIS]</scope>
</reference>
<reference key="20">
    <citation type="journal article" date="2003" name="Nature">
        <title>Global analysis of protein expression in yeast.</title>
        <authorList>
            <person name="Ghaemmaghami S."/>
            <person name="Huh W.-K."/>
            <person name="Bower K."/>
            <person name="Howson R.W."/>
            <person name="Belle A."/>
            <person name="Dephoure N."/>
            <person name="O'Shea E.K."/>
            <person name="Weissman J.S."/>
        </authorList>
    </citation>
    <scope>LEVEL OF PROTEIN EXPRESSION [LARGE SCALE ANALYSIS]</scope>
</reference>
<reference key="21">
    <citation type="journal article" date="2007" name="J. Proteome Res.">
        <title>Large-scale phosphorylation analysis of alpha-factor-arrested Saccharomyces cerevisiae.</title>
        <authorList>
            <person name="Li X."/>
            <person name="Gerber S.A."/>
            <person name="Rudner A.D."/>
            <person name="Beausoleil S.A."/>
            <person name="Haas W."/>
            <person name="Villen J."/>
            <person name="Elias J.E."/>
            <person name="Gygi S.P."/>
        </authorList>
    </citation>
    <scope>PHOSPHORYLATION [LARGE SCALE ANALYSIS] AT SER-1039 AND SER-1040</scope>
    <scope>IDENTIFICATION BY MASS SPECTROMETRY [LARGE SCALE ANALYSIS]</scope>
    <source>
        <strain>ADR376</strain>
    </source>
</reference>
<reference key="22">
    <citation type="journal article" date="2008" name="Mol. Cell. Proteomics">
        <title>A multidimensional chromatography technology for in-depth phosphoproteome analysis.</title>
        <authorList>
            <person name="Albuquerque C.P."/>
            <person name="Smolka M.B."/>
            <person name="Payne S.H."/>
            <person name="Bafna V."/>
            <person name="Eng J."/>
            <person name="Zhou H."/>
        </authorList>
    </citation>
    <scope>PHOSPHORYLATION [LARGE SCALE ANALYSIS] AT THR-972; SER-1039 AND SER-1040</scope>
    <scope>IDENTIFICATION BY MASS SPECTROMETRY [LARGE SCALE ANALYSIS]</scope>
</reference>
<reference key="23">
    <citation type="journal article" date="2009" name="Science">
        <title>Global analysis of Cdk1 substrate phosphorylation sites provides insights into evolution.</title>
        <authorList>
            <person name="Holt L.J."/>
            <person name="Tuch B.B."/>
            <person name="Villen J."/>
            <person name="Johnson A.D."/>
            <person name="Gygi S.P."/>
            <person name="Morgan D.O."/>
        </authorList>
    </citation>
    <scope>PHOSPHORYLATION [LARGE SCALE ANALYSIS] AT SER-642; THR-972; SER-974; SER-1039 AND SER-1040</scope>
    <scope>IDENTIFICATION BY MASS SPECTROMETRY [LARGE SCALE ANALYSIS]</scope>
</reference>
<reference key="24">
    <citation type="journal article" date="2012" name="J. Biol. Chem.">
        <title>Overexpression of eukaryotic translation elongation factor 3 impairs Gcn2 protein activation.</title>
        <authorList>
            <person name="Visweswaraiah J."/>
            <person name="Lee S.J."/>
            <person name="Hinnebusch A.G."/>
            <person name="Sattlegger E."/>
        </authorList>
    </citation>
    <scope>FUNCTION</scope>
    <scope>ASSOCIATION WITH RIBOSOMES</scope>
    <scope>DOMAIN</scope>
</reference>
<reference key="25">
    <citation type="journal article" date="2012" name="Proc. Natl. Acad. Sci. U.S.A.">
        <title>N-terminal acetylome analyses and functional insights of the N-terminal acetyltransferase NatB.</title>
        <authorList>
            <person name="Van Damme P."/>
            <person name="Lasa M."/>
            <person name="Polevoda B."/>
            <person name="Gazquez C."/>
            <person name="Elosegui-Artola A."/>
            <person name="Kim D.S."/>
            <person name="De Juan-Pardo E."/>
            <person name="Demeyer K."/>
            <person name="Hole K."/>
            <person name="Larrea E."/>
            <person name="Timmerman E."/>
            <person name="Prieto J."/>
            <person name="Arnesen T."/>
            <person name="Sherman F."/>
            <person name="Gevaert K."/>
            <person name="Aldabe R."/>
        </authorList>
    </citation>
    <scope>ACETYLATION [LARGE SCALE ANALYSIS] AT SER-2</scope>
    <scope>CLEAVAGE OF INITIATOR METHIONINE [LARGE SCALE ANALYSIS]</scope>
    <scope>IDENTIFICATION BY MASS SPECTROMETRY [LARGE SCALE ANALYSIS]</scope>
</reference>
<reference key="26">
    <citation type="journal article" date="2012" name="Proteomics">
        <title>Sites of ubiquitin attachment in Saccharomyces cerevisiae.</title>
        <authorList>
            <person name="Starita L.M."/>
            <person name="Lo R.S."/>
            <person name="Eng J.K."/>
            <person name="von Haller P.D."/>
            <person name="Fields S."/>
        </authorList>
    </citation>
    <scope>UBIQUITINATION [LARGE SCALE ANALYSIS] AT LYS-350 AND LYS-636</scope>
    <scope>IDENTIFICATION BY MASS SPECTROMETRY [LARGE SCALE ANALYSIS]</scope>
</reference>
<reference key="27">
    <citation type="journal article" date="2012" name="Proteomics">
        <title>Methylation of translation-associated proteins in Saccharomyces cerevisiae: Identification of methylated lysines and their methyltransferases.</title>
        <authorList>
            <person name="Couttas T.A."/>
            <person name="Raftery M.J."/>
            <person name="Padula M.P."/>
            <person name="Herbert B.R."/>
            <person name="Wilkins M.R."/>
        </authorList>
    </citation>
    <scope>METHYLATION AT LYS-187; LYS-196 AND LYS-789</scope>
</reference>
<reference key="28">
    <citation type="journal article" date="2018" name="PLoS ONE">
        <title>Demonstration of translation elongation factor 3 activity from a non-fungal species, Phytophthora infestans.</title>
        <authorList>
            <person name="Mateyak M.K."/>
            <person name="Pupek J.K."/>
            <person name="Garino A.E."/>
            <person name="Knapp M.C."/>
            <person name="Colmer S.F."/>
            <person name="Kinzy T.G."/>
            <person name="Dunaway S."/>
        </authorList>
    </citation>
    <scope>FUNCTION</scope>
    <scope>CATALYTIC ACTIVITY</scope>
    <scope>PATHWAY</scope>
</reference>
<reference key="29">
    <citation type="journal article" date="2020" name="Genes (Basel)">
        <title>Eukaryotic Elongation Factor 3 Protects Saccharomyces cerevisiae Yeast from Oxidative Stress.</title>
        <authorList>
            <person name="Goscinska K."/>
            <person name="Shahmoradi Ghahe S."/>
            <person name="Domogala S."/>
            <person name="Topf U."/>
        </authorList>
    </citation>
    <scope>INDUCTION</scope>
</reference>
<reference key="30">
    <citation type="journal article" date="2023" name="Arch. Biochem. Biophys.">
        <title>A novel function for eukaryotic elongation factor 3: Inhibition of stop codon readthrough in yeast.</title>
        <authorList>
            <person name="Kobayashi S."/>
            <person name="Kaji A."/>
            <person name="Kaji H."/>
        </authorList>
    </citation>
    <scope>FUNCTION</scope>
    <scope>PATHWAY</scope>
</reference>
<reference evidence="22 23 24 25" key="31">
    <citation type="journal article" date="2006" name="Nature">
        <title>Structure of eEF3 and the mechanism of transfer RNA release from the E-site.</title>
        <authorList>
            <person name="Andersen C.B."/>
            <person name="Becker T."/>
            <person name="Blau M."/>
            <person name="Anand M."/>
            <person name="Halic M."/>
            <person name="Balar B."/>
            <person name="Mielke T."/>
            <person name="Boesen T."/>
            <person name="Pedersen J.S."/>
            <person name="Spahn C.M."/>
            <person name="Kinzy T.G."/>
            <person name="Andersen G.R."/>
            <person name="Beckmann R."/>
        </authorList>
    </citation>
    <scope>X-RAY CRYSTALLOGRAPHY (2.40 ANGSTROMS) OF 2-981 IN COMPLEX WITH ADP</scope>
    <scope>SUBUNIT</scope>
    <scope>ASSOCIATION WITH RIBOSOMES</scope>
</reference>
<sequence length="1044" mass="115945">MSDSQQSIKVLEELFQKLSVATADNRHEIASEVASFLNGNIIEHDVPEHFFGELAKGIKDKKTAANAMQAVAHIANQSNLSPSVEPYIVQLVPAICTNAGNKDKEIQSVASETLISIVNAVNPVAIKALLPHLTNAIVETNKWQEKIAILAAISAMVDAAKDQVALRMPELIPVLSETMWDTKKEVKAAATAAMTKATETVDNKDIERFIPSLIQCIADPTEVPETVHLLGATTFVAEVTPATLSIMVPLLSRGLNERETGIKRKSAVIIDNMCKLVEDPQVIAPFLGKLLPGLKSNFATIADPEAREVTLRALKTLRRVGNVGEDDAIPEVSHAGDVSTTLQVVNELLKDETVAPRFKIVVEYIAAIGADLIDERIIDQQAWFTHITPYMTIFLHEKKAKDILDEFRKRAVDNIPVGPNFDDEEDEGEDLCNCEFSLAYGAKILLNKTQLRLKRARRYGICGPNGCGKSTLMRAIANGQVDGFPTQEECRTVYVEHDIDGTHSDTSVLDFVFESGVGTKEAIKDKLIEFGFTDEMIAMPISALSGGWKMKLALARAVLRNADILLLDEPTNHLDTVNVAWLVNYLNTCGITSITISHDSVFLDNVCEYIINYEGLKLRKYKGNFTEFVKKCPAAKAYEELSNTDLEFKFPEPGYLEGVKTKQKAIVKVTNMEFQYPGTSKPQITDINFQCSLSSRIAVIGPNGAGKSTLINVLTGELLPTSGEVYTHENCRIAYIKQHAFAHIESHLDKTPSEYIQWRFQTGEDRETMDRANRQINENDAEAMNKIFKIEGTPRRIAGIHSRRKFKNTYEYECSFLLGENIGMKSERWVPMMSVDNAWIPRGELVESHSKMVAEVDMKEALASGQFRPLTRKEIEEHCSMLGLDPEIVSHSRIRGLSGGQKVKLVLAAGTWQRPHLIVLDEPTNYLDRDSLGALSKALKEFEGGVIIITHSAEFTKNLTEEVWAVKDGRMTPSGHNWVSGQGAGPRIEKKEDEEDKFDAMGNKIAGGKKKKKLSSAELRKKKKERMKKKKELGDAYVSSDEEF</sequence>
<gene>
    <name type="primary">YEF3</name>
    <name type="synonym">EFC1</name>
    <name type="synonym">TEF3</name>
    <name type="synonym">YEF3A</name>
    <name type="ordered locus">YLR249W</name>
    <name type="ORF">L9672.5</name>
</gene>
<keyword id="KW-0002">3D-structure</keyword>
<keyword id="KW-0007">Acetylation</keyword>
<keyword id="KW-0067">ATP-binding</keyword>
<keyword id="KW-0963">Cytoplasm</keyword>
<keyword id="KW-0903">Direct protein sequencing</keyword>
<keyword id="KW-0251">Elongation factor</keyword>
<keyword id="KW-0378">Hydrolase</keyword>
<keyword id="KW-1017">Isopeptide bond</keyword>
<keyword id="KW-0488">Methylation</keyword>
<keyword id="KW-0547">Nucleotide-binding</keyword>
<keyword id="KW-0597">Phosphoprotein</keyword>
<keyword id="KW-0648">Protein biosynthesis</keyword>
<keyword id="KW-1185">Reference proteome</keyword>
<keyword id="KW-0677">Repeat</keyword>
<keyword id="KW-0694">RNA-binding</keyword>
<keyword id="KW-0699">rRNA-binding</keyword>
<keyword id="KW-0832">Ubl conjugation</keyword>
<protein>
    <recommendedName>
        <fullName>Elongation factor 3A</fullName>
        <shortName>EF-3</shortName>
        <shortName>EF-3A</shortName>
        <ecNumber evidence="9 12 13 14 21">3.6.4.-</ecNumber>
    </recommendedName>
    <alternativeName>
        <fullName>Eukaryotic elongation factor 3</fullName>
        <shortName>eEF3</shortName>
    </alternativeName>
    <alternativeName>
        <fullName>Translation elongation factor 3A</fullName>
    </alternativeName>
    <alternativeName>
        <fullName>Yeast elongation factor 3</fullName>
    </alternativeName>
</protein>
<feature type="initiator methionine" description="Removed" evidence="16 30">
    <location>
        <position position="1"/>
    </location>
</feature>
<feature type="chain" id="PRO_0000093458" description="Elongation factor 3A">
    <location>
        <begin position="2"/>
        <end position="1044"/>
    </location>
</feature>
<feature type="repeat" description="HEAT 1">
    <location>
        <begin position="5"/>
        <end position="42"/>
    </location>
</feature>
<feature type="repeat" description="HEAT 2">
    <location>
        <begin position="86"/>
        <end position="123"/>
    </location>
</feature>
<feature type="repeat" description="HEAT 3">
    <location>
        <begin position="125"/>
        <end position="162"/>
    </location>
</feature>
<feature type="repeat" description="HEAT 4">
    <location>
        <begin position="166"/>
        <end position="203"/>
    </location>
</feature>
<feature type="repeat" description="HEAT 5">
    <location>
        <begin position="205"/>
        <end position="241"/>
    </location>
</feature>
<feature type="repeat" description="HEAT 6">
    <location>
        <begin position="242"/>
        <end position="279"/>
    </location>
</feature>
<feature type="repeat" description="HEAT 7">
    <location>
        <begin position="285"/>
        <end position="323"/>
    </location>
</feature>
<feature type="domain" description="ABC transporter 1" evidence="1">
    <location>
        <begin position="426"/>
        <end position="641"/>
    </location>
</feature>
<feature type="domain" description="ABC transporter 2" evidence="1">
    <location>
        <begin position="667"/>
        <end position="993"/>
    </location>
</feature>
<feature type="region of interest" description="Disordered" evidence="2">
    <location>
        <begin position="974"/>
        <end position="1044"/>
    </location>
</feature>
<feature type="compositionally biased region" description="Basic residues" evidence="2">
    <location>
        <begin position="1007"/>
        <end position="1031"/>
    </location>
</feature>
<feature type="binding site" evidence="6 22 23">
    <location>
        <position position="42"/>
    </location>
    <ligand>
        <name>ADP</name>
        <dbReference type="ChEBI" id="CHEBI:456216"/>
    </ligand>
</feature>
<feature type="binding site" evidence="6 22 23">
    <location>
        <position position="44"/>
    </location>
    <ligand>
        <name>ADP</name>
        <dbReference type="ChEBI" id="CHEBI:456216"/>
    </ligand>
</feature>
<feature type="binding site" evidence="6 22">
    <location>
        <position position="83"/>
    </location>
    <ligand>
        <name>ADP</name>
        <dbReference type="ChEBI" id="CHEBI:456216"/>
    </ligand>
</feature>
<feature type="binding site" evidence="6 22 23">
    <location>
        <position position="392"/>
    </location>
    <ligand>
        <name>ADP</name>
        <dbReference type="ChEBI" id="CHEBI:456216"/>
    </ligand>
</feature>
<feature type="binding site" evidence="6 22 23">
    <location>
        <position position="396"/>
    </location>
    <ligand>
        <name>ADP</name>
        <dbReference type="ChEBI" id="CHEBI:456216"/>
    </ligand>
</feature>
<feature type="binding site" evidence="6 22 23">
    <location>
        <position position="397"/>
    </location>
    <ligand>
        <name>ADP</name>
        <dbReference type="ChEBI" id="CHEBI:456216"/>
    </ligand>
</feature>
<feature type="binding site" evidence="6 22 23">
    <location>
        <position position="703"/>
    </location>
    <ligand>
        <name>ADP</name>
        <dbReference type="ChEBI" id="CHEBI:456216"/>
    </ligand>
</feature>
<feature type="binding site" evidence="6 22">
    <location>
        <position position="922"/>
    </location>
    <ligand>
        <name>ADP</name>
        <dbReference type="ChEBI" id="CHEBI:456216"/>
    </ligand>
</feature>
<feature type="binding site" evidence="6 22 23">
    <location>
        <position position="925"/>
    </location>
    <ligand>
        <name>ADP</name>
        <dbReference type="ChEBI" id="CHEBI:456216"/>
    </ligand>
</feature>
<feature type="binding site" evidence="6 22 23">
    <location>
        <position position="951"/>
    </location>
    <ligand>
        <name>ADP</name>
        <dbReference type="ChEBI" id="CHEBI:456216"/>
    </ligand>
</feature>
<feature type="modified residue" description="N-acetylserine" evidence="16 30">
    <location>
        <position position="2"/>
    </location>
</feature>
<feature type="modified residue" description="N6,N6,N6-trimethyllysine" evidence="7">
    <location>
        <position position="187"/>
    </location>
</feature>
<feature type="modified residue" description="N6,N6,N6-trimethyllysine" evidence="7">
    <location>
        <position position="196"/>
    </location>
</feature>
<feature type="modified residue" description="Phosphoserine" evidence="28">
    <location>
        <position position="642"/>
    </location>
</feature>
<feature type="modified residue" description="N6,N6,N6-trimethyllysine" evidence="7">
    <location>
        <position position="789"/>
    </location>
</feature>
<feature type="modified residue" description="Phosphothreonine" evidence="27 28">
    <location>
        <position position="972"/>
    </location>
</feature>
<feature type="modified residue" description="Phosphoserine" evidence="28">
    <location>
        <position position="974"/>
    </location>
</feature>
<feature type="modified residue" description="Phosphoserine" evidence="26 27 28">
    <location>
        <position position="1039"/>
    </location>
</feature>
<feature type="modified residue" description="Phosphoserine" evidence="26 27 28">
    <location>
        <position position="1040"/>
    </location>
</feature>
<feature type="cross-link" description="Glycyl lysine isopeptide (Lys-Gly) (interchain with G-Cter in ubiquitin)" evidence="29">
    <location>
        <position position="350"/>
    </location>
</feature>
<feature type="cross-link" description="Glycyl lysine isopeptide (Lys-Gly) (interchain with G-Cter in ubiquitin)" evidence="29">
    <location>
        <position position="636"/>
    </location>
</feature>
<feature type="mutagenesis site" description="Impairs ribosome-activated ATPase activity. Strongly decreases cell population growth." evidence="15">
    <original>G</original>
    <variation>V</variation>
    <location>
        <position position="463"/>
    </location>
</feature>
<feature type="mutagenesis site" description="Impairs ribosome-activated ATPase activity. Inviable." evidence="15">
    <original>K</original>
    <variation>R</variation>
    <location>
        <position position="469"/>
    </location>
</feature>
<feature type="mutagenesis site" description="Reduces ATPase activity and interaction with eEF1A. Required for growth at 37 degrees Celsius and causes a 50% reduction of total protein synthesis at permissive temperatures." evidence="3">
    <original>F</original>
    <variation>S</variation>
    <location>
        <position position="650"/>
    </location>
</feature>
<feature type="mutagenesis site" description="Impairs ribosome-activated ATPase activity. Inviable." evidence="15">
    <original>G</original>
    <variation>V</variation>
    <location>
        <position position="701"/>
    </location>
</feature>
<feature type="mutagenesis site" description="Impairs ribosome-activated ATPase activity. Inviable." evidence="15">
    <original>K</original>
    <variation>R</variation>
    <location>
        <position position="707"/>
    </location>
</feature>
<feature type="sequence conflict" description="In Ref. 1; AAA35232, 2; no nucleotide entry and 3; AAA35233." evidence="20" ref="1 2 3">
    <original>I</original>
    <variation>F</variation>
    <location>
        <position position="153"/>
    </location>
</feature>
<feature type="sequence conflict" description="In Ref. 1; AAA35232, 2; no nucleotide entry and 3; AAA35233." evidence="20" ref="1 2 3">
    <original>V</original>
    <variation>L</variation>
    <location>
        <position position="332"/>
    </location>
</feature>
<feature type="helix" evidence="31">
    <location>
        <begin position="3"/>
        <end position="18"/>
    </location>
</feature>
<feature type="turn" evidence="31">
    <location>
        <begin position="23"/>
        <end position="25"/>
    </location>
</feature>
<feature type="helix" evidence="31">
    <location>
        <begin position="26"/>
        <end position="37"/>
    </location>
</feature>
<feature type="strand" evidence="31">
    <location>
        <begin position="42"/>
        <end position="45"/>
    </location>
</feature>
<feature type="helix" evidence="31">
    <location>
        <begin position="48"/>
        <end position="58"/>
    </location>
</feature>
<feature type="helix" evidence="31">
    <location>
        <begin position="61"/>
        <end position="74"/>
    </location>
</feature>
<feature type="turn" evidence="31">
    <location>
        <begin position="77"/>
        <end position="79"/>
    </location>
</feature>
<feature type="turn" evidence="31">
    <location>
        <begin position="82"/>
        <end position="84"/>
    </location>
</feature>
<feature type="helix" evidence="31">
    <location>
        <begin position="85"/>
        <end position="89"/>
    </location>
</feature>
<feature type="helix" evidence="31">
    <location>
        <begin position="92"/>
        <end position="98"/>
    </location>
</feature>
<feature type="helix" evidence="31">
    <location>
        <begin position="104"/>
        <end position="120"/>
    </location>
</feature>
<feature type="helix" evidence="31">
    <location>
        <begin position="123"/>
        <end position="125"/>
    </location>
</feature>
<feature type="helix" evidence="31">
    <location>
        <begin position="126"/>
        <end position="139"/>
    </location>
</feature>
<feature type="helix" evidence="31">
    <location>
        <begin position="143"/>
        <end position="159"/>
    </location>
</feature>
<feature type="helix" evidence="31">
    <location>
        <begin position="161"/>
        <end position="178"/>
    </location>
</feature>
<feature type="helix" evidence="31">
    <location>
        <begin position="184"/>
        <end position="197"/>
    </location>
</feature>
<feature type="helix" evidence="31">
    <location>
        <begin position="198"/>
        <end position="200"/>
    </location>
</feature>
<feature type="turn" evidence="31">
    <location>
        <begin position="204"/>
        <end position="206"/>
    </location>
</feature>
<feature type="helix" evidence="31">
    <location>
        <begin position="207"/>
        <end position="209"/>
    </location>
</feature>
<feature type="helix" evidence="31">
    <location>
        <begin position="210"/>
        <end position="218"/>
    </location>
</feature>
<feature type="helix" evidence="31">
    <location>
        <begin position="222"/>
        <end position="230"/>
    </location>
</feature>
<feature type="helix" evidence="31">
    <location>
        <begin position="241"/>
        <end position="255"/>
    </location>
</feature>
<feature type="strand" evidence="31">
    <location>
        <begin position="257"/>
        <end position="259"/>
    </location>
</feature>
<feature type="helix" evidence="31">
    <location>
        <begin position="260"/>
        <end position="274"/>
    </location>
</feature>
<feature type="helix" evidence="31">
    <location>
        <begin position="280"/>
        <end position="283"/>
    </location>
</feature>
<feature type="helix" evidence="31">
    <location>
        <begin position="284"/>
        <end position="289"/>
    </location>
</feature>
<feature type="helix" evidence="31">
    <location>
        <begin position="291"/>
        <end position="297"/>
    </location>
</feature>
<feature type="turn" evidence="31">
    <location>
        <begin position="298"/>
        <end position="300"/>
    </location>
</feature>
<feature type="helix" evidence="31">
    <location>
        <begin position="304"/>
        <end position="321"/>
    </location>
</feature>
<feature type="turn" evidence="31">
    <location>
        <begin position="325"/>
        <end position="327"/>
    </location>
</feature>
<feature type="helix" evidence="31">
    <location>
        <begin position="338"/>
        <end position="348"/>
    </location>
</feature>
<feature type="turn" evidence="31">
    <location>
        <begin position="349"/>
        <end position="351"/>
    </location>
</feature>
<feature type="helix" evidence="31">
    <location>
        <begin position="356"/>
        <end position="358"/>
    </location>
</feature>
<feature type="helix" evidence="31">
    <location>
        <begin position="359"/>
        <end position="374"/>
    </location>
</feature>
<feature type="helix" evidence="31">
    <location>
        <begin position="380"/>
        <end position="386"/>
    </location>
</feature>
<feature type="helix" evidence="31">
    <location>
        <begin position="388"/>
        <end position="391"/>
    </location>
</feature>
<feature type="turn" evidence="31">
    <location>
        <begin position="392"/>
        <end position="394"/>
    </location>
</feature>
<feature type="helix" evidence="31">
    <location>
        <begin position="397"/>
        <end position="413"/>
    </location>
</feature>
<feature type="strand" evidence="31">
    <location>
        <begin position="426"/>
        <end position="428"/>
    </location>
</feature>
<feature type="strand" evidence="31">
    <location>
        <begin position="430"/>
        <end position="440"/>
    </location>
</feature>
<feature type="strand" evidence="31">
    <location>
        <begin position="443"/>
        <end position="454"/>
    </location>
</feature>
<feature type="strand" evidence="31">
    <location>
        <begin position="458"/>
        <end position="462"/>
    </location>
</feature>
<feature type="helix" evidence="31">
    <location>
        <begin position="469"/>
        <end position="478"/>
    </location>
</feature>
<feature type="turn" evidence="31">
    <location>
        <begin position="487"/>
        <end position="489"/>
    </location>
</feature>
<feature type="strand" evidence="31">
    <location>
        <begin position="492"/>
        <end position="494"/>
    </location>
</feature>
<feature type="helix" evidence="31">
    <location>
        <begin position="508"/>
        <end position="513"/>
    </location>
</feature>
<feature type="turn" evidence="32">
    <location>
        <begin position="514"/>
        <end position="516"/>
    </location>
</feature>
<feature type="helix" evidence="31">
    <location>
        <begin position="520"/>
        <end position="529"/>
    </location>
</feature>
<feature type="helix" evidence="31">
    <location>
        <begin position="534"/>
        <end position="538"/>
    </location>
</feature>
<feature type="helix" evidence="31">
    <location>
        <begin position="541"/>
        <end position="543"/>
    </location>
</feature>
<feature type="helix" evidence="31">
    <location>
        <begin position="546"/>
        <end position="559"/>
    </location>
</feature>
<feature type="strand" evidence="31">
    <location>
        <begin position="563"/>
        <end position="569"/>
    </location>
</feature>
<feature type="turn" evidence="31">
    <location>
        <begin position="570"/>
        <end position="573"/>
    </location>
</feature>
<feature type="helix" evidence="31">
    <location>
        <begin position="576"/>
        <end position="588"/>
    </location>
</feature>
<feature type="strand" evidence="31">
    <location>
        <begin position="591"/>
        <end position="596"/>
    </location>
</feature>
<feature type="helix" evidence="31">
    <location>
        <begin position="600"/>
        <end position="606"/>
    </location>
</feature>
<feature type="strand" evidence="31">
    <location>
        <begin position="608"/>
        <end position="614"/>
    </location>
</feature>
<feature type="strand" evidence="31">
    <location>
        <begin position="617"/>
        <end position="623"/>
    </location>
</feature>
<feature type="helix" evidence="31">
    <location>
        <begin position="625"/>
        <end position="631"/>
    </location>
</feature>
<feature type="helix" evidence="31">
    <location>
        <begin position="633"/>
        <end position="637"/>
    </location>
</feature>
<feature type="strand" evidence="31">
    <location>
        <begin position="638"/>
        <end position="640"/>
    </location>
</feature>
<feature type="turn" evidence="31">
    <location>
        <begin position="641"/>
        <end position="643"/>
    </location>
</feature>
<feature type="strand" evidence="31">
    <location>
        <begin position="664"/>
        <end position="674"/>
    </location>
</feature>
<feature type="strand" evidence="32">
    <location>
        <begin position="679"/>
        <end position="681"/>
    </location>
</feature>
<feature type="strand" evidence="31">
    <location>
        <begin position="683"/>
        <end position="692"/>
    </location>
</feature>
<feature type="strand" evidence="31">
    <location>
        <begin position="696"/>
        <end position="699"/>
    </location>
</feature>
<feature type="helix" evidence="31">
    <location>
        <begin position="705"/>
        <end position="714"/>
    </location>
</feature>
<feature type="strand" evidence="31">
    <location>
        <begin position="721"/>
        <end position="727"/>
    </location>
</feature>
<feature type="strand" evidence="31">
    <location>
        <begin position="733"/>
        <end position="736"/>
    </location>
</feature>
<feature type="helix" evidence="31">
    <location>
        <begin position="738"/>
        <end position="743"/>
    </location>
</feature>
<feature type="helix" evidence="31">
    <location>
        <begin position="744"/>
        <end position="746"/>
    </location>
</feature>
<feature type="helix" evidence="31">
    <location>
        <begin position="752"/>
        <end position="759"/>
    </location>
</feature>
<feature type="turn" evidence="31">
    <location>
        <begin position="760"/>
        <end position="762"/>
    </location>
</feature>
<feature type="turn" evidence="31">
    <location>
        <begin position="766"/>
        <end position="772"/>
    </location>
</feature>
<feature type="helix" evidence="31">
    <location>
        <begin position="783"/>
        <end position="785"/>
    </location>
</feature>
<feature type="strand" evidence="31">
    <location>
        <begin position="788"/>
        <end position="790"/>
    </location>
</feature>
<feature type="strand" evidence="31">
    <location>
        <begin position="793"/>
        <end position="806"/>
    </location>
</feature>
<feature type="strand" evidence="31">
    <location>
        <begin position="809"/>
        <end position="821"/>
    </location>
</feature>
<feature type="strand" evidence="31">
    <location>
        <begin position="828"/>
        <end position="831"/>
    </location>
</feature>
<feature type="helix" evidence="31">
    <location>
        <begin position="834"/>
        <end position="836"/>
    </location>
</feature>
<feature type="strand" evidence="31">
    <location>
        <begin position="838"/>
        <end position="841"/>
    </location>
</feature>
<feature type="helix" evidence="31">
    <location>
        <begin position="842"/>
        <end position="844"/>
    </location>
</feature>
<feature type="helix" evidence="31">
    <location>
        <begin position="846"/>
        <end position="863"/>
    </location>
</feature>
<feature type="helix" evidence="31">
    <location>
        <begin position="872"/>
        <end position="881"/>
    </location>
</feature>
<feature type="helix" evidence="31">
    <location>
        <begin position="886"/>
        <end position="891"/>
    </location>
</feature>
<feature type="helix" evidence="31">
    <location>
        <begin position="894"/>
        <end position="896"/>
    </location>
</feature>
<feature type="helix" evidence="31">
    <location>
        <begin position="899"/>
        <end position="911"/>
    </location>
</feature>
<feature type="strand" evidence="31">
    <location>
        <begin position="916"/>
        <end position="921"/>
    </location>
</feature>
<feature type="helix" evidence="31">
    <location>
        <begin position="923"/>
        <end position="925"/>
    </location>
</feature>
<feature type="helix" evidence="31">
    <location>
        <begin position="929"/>
        <end position="940"/>
    </location>
</feature>
<feature type="strand" evidence="31">
    <location>
        <begin position="943"/>
        <end position="949"/>
    </location>
</feature>
<feature type="helix" evidence="31">
    <location>
        <begin position="953"/>
        <end position="956"/>
    </location>
</feature>
<feature type="turn" evidence="31">
    <location>
        <begin position="957"/>
        <end position="959"/>
    </location>
</feature>
<feature type="strand" evidence="31">
    <location>
        <begin position="962"/>
        <end position="964"/>
    </location>
</feature>
<organism>
    <name type="scientific">Saccharomyces cerevisiae (strain ATCC 204508 / S288c)</name>
    <name type="common">Baker's yeast</name>
    <dbReference type="NCBI Taxonomy" id="559292"/>
    <lineage>
        <taxon>Eukaryota</taxon>
        <taxon>Fungi</taxon>
        <taxon>Dikarya</taxon>
        <taxon>Ascomycota</taxon>
        <taxon>Saccharomycotina</taxon>
        <taxon>Saccharomycetes</taxon>
        <taxon>Saccharomycetales</taxon>
        <taxon>Saccharomycetaceae</taxon>
        <taxon>Saccharomyces</taxon>
    </lineage>
</organism>
<evidence type="ECO:0000255" key="1">
    <source>
        <dbReference type="PROSITE-ProRule" id="PRU00434"/>
    </source>
</evidence>
<evidence type="ECO:0000256" key="2">
    <source>
        <dbReference type="SAM" id="MobiDB-lite"/>
    </source>
</evidence>
<evidence type="ECO:0000269" key="3">
    <source>
    </source>
</evidence>
<evidence type="ECO:0000269" key="4">
    <source>
    </source>
</evidence>
<evidence type="ECO:0000269" key="5">
    <source>
    </source>
</evidence>
<evidence type="ECO:0000269" key="6">
    <source>
    </source>
</evidence>
<evidence type="ECO:0000269" key="7">
    <source>
    </source>
</evidence>
<evidence type="ECO:0000269" key="8">
    <source>
    </source>
</evidence>
<evidence type="ECO:0000269" key="9">
    <source>
    </source>
</evidence>
<evidence type="ECO:0000269" key="10">
    <source>
    </source>
</evidence>
<evidence type="ECO:0000269" key="11">
    <source>
    </source>
</evidence>
<evidence type="ECO:0000269" key="12">
    <source>
    </source>
</evidence>
<evidence type="ECO:0000269" key="13">
    <source>
    </source>
</evidence>
<evidence type="ECO:0000269" key="14">
    <source>
    </source>
</evidence>
<evidence type="ECO:0000269" key="15">
    <source>
    </source>
</evidence>
<evidence type="ECO:0000269" key="16">
    <source>
    </source>
</evidence>
<evidence type="ECO:0000269" key="17">
    <source>
    </source>
</evidence>
<evidence type="ECO:0000269" key="18">
    <source>
    </source>
</evidence>
<evidence type="ECO:0000269" key="19">
    <source>
    </source>
</evidence>
<evidence type="ECO:0000305" key="20"/>
<evidence type="ECO:0000305" key="21">
    <source>
    </source>
</evidence>
<evidence type="ECO:0007744" key="22">
    <source>
        <dbReference type="PDB" id="2IW3"/>
    </source>
</evidence>
<evidence type="ECO:0007744" key="23">
    <source>
        <dbReference type="PDB" id="2IWH"/>
    </source>
</evidence>
<evidence type="ECO:0007744" key="24">
    <source>
        <dbReference type="PDB" id="2IX3"/>
    </source>
</evidence>
<evidence type="ECO:0007744" key="25">
    <source>
        <dbReference type="PDB" id="2IX8"/>
    </source>
</evidence>
<evidence type="ECO:0007744" key="26">
    <source>
    </source>
</evidence>
<evidence type="ECO:0007744" key="27">
    <source>
    </source>
</evidence>
<evidence type="ECO:0007744" key="28">
    <source>
    </source>
</evidence>
<evidence type="ECO:0007744" key="29">
    <source>
    </source>
</evidence>
<evidence type="ECO:0007744" key="30">
    <source>
    </source>
</evidence>
<evidence type="ECO:0007829" key="31">
    <source>
        <dbReference type="PDB" id="2IW3"/>
    </source>
</evidence>
<evidence type="ECO:0007829" key="32">
    <source>
        <dbReference type="PDB" id="2IX3"/>
    </source>
</evidence>
<accession>P16521</accession>
<accession>D6VYP7</accession>
<accession>O93815</accession>
<accession>Q06558</accession>
<name>EF3A_YEAST</name>
<dbReference type="EC" id="3.6.4.-" evidence="9 12 13 14 21"/>
<dbReference type="EMBL" id="J05197">
    <property type="protein sequence ID" value="AAA35232.1"/>
    <property type="molecule type" value="Genomic_DNA"/>
</dbReference>
<dbReference type="EMBL" id="J05583">
    <property type="protein sequence ID" value="AAA35233.1"/>
    <property type="molecule type" value="Genomic_DNA"/>
</dbReference>
<dbReference type="EMBL" id="U20865">
    <property type="protein sequence ID" value="AAB67391.1"/>
    <property type="molecule type" value="Genomic_DNA"/>
</dbReference>
<dbReference type="EMBL" id="AB018539">
    <property type="protein sequence ID" value="BAA33897.1"/>
    <property type="molecule type" value="Genomic_DNA"/>
</dbReference>
<dbReference type="EMBL" id="BK006945">
    <property type="protein sequence ID" value="DAA09563.1"/>
    <property type="molecule type" value="Genomic_DNA"/>
</dbReference>
<dbReference type="PIR" id="S59395">
    <property type="entry name" value="DVBYE3"/>
</dbReference>
<dbReference type="RefSeq" id="NP_013350.1">
    <property type="nucleotide sequence ID" value="NM_001182136.1"/>
</dbReference>
<dbReference type="PDB" id="2IW3">
    <property type="method" value="X-ray"/>
    <property type="resolution" value="2.40 A"/>
    <property type="chains" value="A/B=2-981"/>
</dbReference>
<dbReference type="PDB" id="2IWH">
    <property type="method" value="X-ray"/>
    <property type="resolution" value="3.00 A"/>
    <property type="chains" value="A/B=2-981"/>
</dbReference>
<dbReference type="PDB" id="2IX3">
    <property type="method" value="X-ray"/>
    <property type="resolution" value="2.70 A"/>
    <property type="chains" value="A/B=2-981"/>
</dbReference>
<dbReference type="PDB" id="2IX8">
    <property type="method" value="EM"/>
    <property type="resolution" value="6.00 A"/>
    <property type="chains" value="A=2-977"/>
</dbReference>
<dbReference type="PDB" id="7B7D">
    <property type="method" value="EM"/>
    <property type="resolution" value="3.30 A"/>
    <property type="chains" value="EF=1-1044"/>
</dbReference>
<dbReference type="PDB" id="8YLD">
    <property type="method" value="EM"/>
    <property type="resolution" value="3.90 A"/>
    <property type="chains" value="v=2-978"/>
</dbReference>
<dbReference type="PDB" id="8YLR">
    <property type="method" value="EM"/>
    <property type="resolution" value="3.90 A"/>
    <property type="chains" value="v=1-1044"/>
</dbReference>
<dbReference type="PDB" id="8Z71">
    <property type="method" value="EM"/>
    <property type="resolution" value="3.60 A"/>
    <property type="chains" value="v=1-1044"/>
</dbReference>
<dbReference type="PDBsum" id="2IW3"/>
<dbReference type="PDBsum" id="2IWH"/>
<dbReference type="PDBsum" id="2IX3"/>
<dbReference type="PDBsum" id="2IX8"/>
<dbReference type="PDBsum" id="7B7D"/>
<dbReference type="PDBsum" id="8YLD"/>
<dbReference type="PDBsum" id="8YLR"/>
<dbReference type="PDBsum" id="8Z71"/>
<dbReference type="EMDB" id="EMD-12081"/>
<dbReference type="EMDB" id="EMD-1233"/>
<dbReference type="SMR" id="P16521"/>
<dbReference type="BioGRID" id="31517">
    <property type="interactions" value="251"/>
</dbReference>
<dbReference type="DIP" id="DIP-2249N"/>
<dbReference type="FunCoup" id="P16521">
    <property type="interactions" value="820"/>
</dbReference>
<dbReference type="IntAct" id="P16521">
    <property type="interactions" value="110"/>
</dbReference>
<dbReference type="MINT" id="P16521"/>
<dbReference type="STRING" id="4932.YLR249W"/>
<dbReference type="CarbonylDB" id="P16521"/>
<dbReference type="iPTMnet" id="P16521"/>
<dbReference type="PaxDb" id="4932-YLR249W"/>
<dbReference type="PeptideAtlas" id="P16521"/>
<dbReference type="EnsemblFungi" id="YLR249W_mRNA">
    <property type="protein sequence ID" value="YLR249W"/>
    <property type="gene ID" value="YLR249W"/>
</dbReference>
<dbReference type="GeneID" id="850951"/>
<dbReference type="KEGG" id="sce:YLR249W"/>
<dbReference type="AGR" id="SGD:S000004239"/>
<dbReference type="SGD" id="S000004239">
    <property type="gene designation" value="YEF3"/>
</dbReference>
<dbReference type="VEuPathDB" id="FungiDB:YLR249W"/>
<dbReference type="eggNOG" id="KOG0062">
    <property type="taxonomic scope" value="Eukaryota"/>
</dbReference>
<dbReference type="eggNOG" id="KOG1242">
    <property type="taxonomic scope" value="Eukaryota"/>
</dbReference>
<dbReference type="GeneTree" id="ENSGT00940000176346"/>
<dbReference type="HOGENOM" id="CLU_002848_0_0_1"/>
<dbReference type="InParanoid" id="P16521"/>
<dbReference type="OMA" id="VLSEAMW"/>
<dbReference type="OrthoDB" id="2110130at2759"/>
<dbReference type="BioCyc" id="YEAST:G3O-32354-MONOMER"/>
<dbReference type="SABIO-RK" id="P16521"/>
<dbReference type="UniPathway" id="UPA00345"/>
<dbReference type="BioGRID-ORCS" id="850951">
    <property type="hits" value="6 hits in 10 CRISPR screens"/>
</dbReference>
<dbReference type="CD-CODE" id="E03F929F">
    <property type="entry name" value="Stress granule"/>
</dbReference>
<dbReference type="EvolutionaryTrace" id="P16521"/>
<dbReference type="PRO" id="PR:P16521"/>
<dbReference type="Proteomes" id="UP000002311">
    <property type="component" value="Chromosome XII"/>
</dbReference>
<dbReference type="RNAct" id="P16521">
    <property type="molecule type" value="protein"/>
</dbReference>
<dbReference type="GO" id="GO:0010494">
    <property type="term" value="C:cytoplasmic stress granule"/>
    <property type="evidence" value="ECO:0000314"/>
    <property type="project" value="SGD"/>
</dbReference>
<dbReference type="GO" id="GO:0022626">
    <property type="term" value="C:cytosolic ribosome"/>
    <property type="evidence" value="ECO:0000314"/>
    <property type="project" value="SGD"/>
</dbReference>
<dbReference type="GO" id="GO:0005840">
    <property type="term" value="C:ribosome"/>
    <property type="evidence" value="ECO:0000314"/>
    <property type="project" value="SGD"/>
</dbReference>
<dbReference type="GO" id="GO:0005524">
    <property type="term" value="F:ATP binding"/>
    <property type="evidence" value="ECO:0000318"/>
    <property type="project" value="GO_Central"/>
</dbReference>
<dbReference type="GO" id="GO:0016887">
    <property type="term" value="F:ATP hydrolysis activity"/>
    <property type="evidence" value="ECO:0000315"/>
    <property type="project" value="SGD"/>
</dbReference>
<dbReference type="GO" id="GO:0043022">
    <property type="term" value="F:ribosome binding"/>
    <property type="evidence" value="ECO:0000314"/>
    <property type="project" value="SGD"/>
</dbReference>
<dbReference type="GO" id="GO:0019843">
    <property type="term" value="F:rRNA binding"/>
    <property type="evidence" value="ECO:0007669"/>
    <property type="project" value="UniProtKB-KW"/>
</dbReference>
<dbReference type="GO" id="GO:0003746">
    <property type="term" value="F:translation elongation factor activity"/>
    <property type="evidence" value="ECO:0000314"/>
    <property type="project" value="SGD"/>
</dbReference>
<dbReference type="GO" id="GO:0002182">
    <property type="term" value="P:cytoplasmic translational elongation"/>
    <property type="evidence" value="ECO:0000314"/>
    <property type="project" value="UniProtKB"/>
</dbReference>
<dbReference type="GO" id="GO:0002184">
    <property type="term" value="P:cytoplasmic translational termination"/>
    <property type="evidence" value="ECO:0000314"/>
    <property type="project" value="UniProtKB"/>
</dbReference>
<dbReference type="GO" id="GO:0006414">
    <property type="term" value="P:translational elongation"/>
    <property type="evidence" value="ECO:0000315"/>
    <property type="project" value="SGD"/>
</dbReference>
<dbReference type="GO" id="GO:0006415">
    <property type="term" value="P:translational termination"/>
    <property type="evidence" value="ECO:0000314"/>
    <property type="project" value="SGD"/>
</dbReference>
<dbReference type="CDD" id="cd03221">
    <property type="entry name" value="ABCF_EF-3"/>
    <property type="match status" value="1"/>
</dbReference>
<dbReference type="CDD" id="cd18626">
    <property type="entry name" value="CD_eEF3"/>
    <property type="match status" value="1"/>
</dbReference>
<dbReference type="FunFam" id="1.20.1390.20:FF:000001">
    <property type="entry name" value="Elongation factor 3"/>
    <property type="match status" value="1"/>
</dbReference>
<dbReference type="FunFam" id="1.25.10.10:FF:000076">
    <property type="entry name" value="Elongation factor 3"/>
    <property type="match status" value="1"/>
</dbReference>
<dbReference type="FunFam" id="2.40.50.990:FF:000001">
    <property type="entry name" value="Elongation factor 3"/>
    <property type="match status" value="1"/>
</dbReference>
<dbReference type="FunFam" id="3.40.50.300:FF:000193">
    <property type="entry name" value="Probable Elongation factor 3"/>
    <property type="match status" value="1"/>
</dbReference>
<dbReference type="Gene3D" id="1.20.1390.20">
    <property type="match status" value="1"/>
</dbReference>
<dbReference type="Gene3D" id="2.40.50.990">
    <property type="match status" value="1"/>
</dbReference>
<dbReference type="Gene3D" id="1.25.10.10">
    <property type="entry name" value="Leucine-rich Repeat Variant"/>
    <property type="match status" value="1"/>
</dbReference>
<dbReference type="Gene3D" id="3.40.50.300">
    <property type="entry name" value="P-loop containing nucleotide triphosphate hydrolases"/>
    <property type="match status" value="2"/>
</dbReference>
<dbReference type="InterPro" id="IPR003593">
    <property type="entry name" value="AAA+_ATPase"/>
</dbReference>
<dbReference type="InterPro" id="IPR003439">
    <property type="entry name" value="ABC_transporter-like_ATP-bd"/>
</dbReference>
<dbReference type="InterPro" id="IPR017871">
    <property type="entry name" value="ABC_transporter-like_CS"/>
</dbReference>
<dbReference type="InterPro" id="IPR050611">
    <property type="entry name" value="ABCF_EF3_subfamily"/>
</dbReference>
<dbReference type="InterPro" id="IPR011989">
    <property type="entry name" value="ARM-like"/>
</dbReference>
<dbReference type="InterPro" id="IPR016024">
    <property type="entry name" value="ARM-type_fold"/>
</dbReference>
<dbReference type="InterPro" id="IPR015688">
    <property type="entry name" value="eEF3_ABC2_chromodomain-like"/>
</dbReference>
<dbReference type="InterPro" id="IPR047038">
    <property type="entry name" value="eEF3_chromodomain-like_sf"/>
</dbReference>
<dbReference type="InterPro" id="IPR040533">
    <property type="entry name" value="EF3_4HB"/>
</dbReference>
<dbReference type="InterPro" id="IPR047036">
    <property type="entry name" value="EF3_4HB_sf"/>
</dbReference>
<dbReference type="InterPro" id="IPR021133">
    <property type="entry name" value="HEAT_type_2"/>
</dbReference>
<dbReference type="InterPro" id="IPR027417">
    <property type="entry name" value="P-loop_NTPase"/>
</dbReference>
<dbReference type="PANTHER" id="PTHR19211">
    <property type="entry name" value="ATP-BINDING TRANSPORT PROTEIN-RELATED"/>
    <property type="match status" value="1"/>
</dbReference>
<dbReference type="PANTHER" id="PTHR19211:SF5">
    <property type="entry name" value="ELONGATION FACTOR 3A-RELATED"/>
    <property type="match status" value="1"/>
</dbReference>
<dbReference type="Pfam" id="PF17947">
    <property type="entry name" value="4HB"/>
    <property type="match status" value="1"/>
</dbReference>
<dbReference type="Pfam" id="PF00005">
    <property type="entry name" value="ABC_tran"/>
    <property type="match status" value="3"/>
</dbReference>
<dbReference type="Pfam" id="PF24984">
    <property type="entry name" value="HEAT_EF3_GNC1"/>
    <property type="match status" value="1"/>
</dbReference>
<dbReference type="Pfam" id="PF24987">
    <property type="entry name" value="HEAT_EF3_N"/>
    <property type="match status" value="1"/>
</dbReference>
<dbReference type="SMART" id="SM00382">
    <property type="entry name" value="AAA"/>
    <property type="match status" value="2"/>
</dbReference>
<dbReference type="SUPFAM" id="SSF48371">
    <property type="entry name" value="ARM repeat"/>
    <property type="match status" value="1"/>
</dbReference>
<dbReference type="SUPFAM" id="SSF52540">
    <property type="entry name" value="P-loop containing nucleoside triphosphate hydrolases"/>
    <property type="match status" value="2"/>
</dbReference>
<dbReference type="PROSITE" id="PS00211">
    <property type="entry name" value="ABC_TRANSPORTER_1"/>
    <property type="match status" value="2"/>
</dbReference>
<dbReference type="PROSITE" id="PS50893">
    <property type="entry name" value="ABC_TRANSPORTER_2"/>
    <property type="match status" value="2"/>
</dbReference>
<dbReference type="PROSITE" id="PS50077">
    <property type="entry name" value="HEAT_REPEAT"/>
    <property type="match status" value="1"/>
</dbReference>